<keyword id="KW-0217">Developmental protein</keyword>
<keyword id="KW-0325">Glycoprotein</keyword>
<keyword id="KW-0328">Glycosyltransferase</keyword>
<keyword id="KW-0333">Golgi apparatus</keyword>
<keyword id="KW-0443">Lipid metabolism</keyword>
<keyword id="KW-0472">Membrane</keyword>
<keyword id="KW-1267">Proteomics identification</keyword>
<keyword id="KW-1185">Reference proteome</keyword>
<keyword id="KW-0735">Signal-anchor</keyword>
<keyword id="KW-0808">Transferase</keyword>
<keyword id="KW-0812">Transmembrane</keyword>
<keyword id="KW-1133">Transmembrane helix</keyword>
<comment type="function">
    <text evidence="3 4">Beta-1,3-N-acetylglucosaminyltransferase that plays a key role in the synthesis of lacto- or neolacto-series carbohydrate chains on glycolipids, notably by participating in biosynthesis of HNK-1 and Lewis X carbohydrate structures. Has strong activity toward lactosylceramide (LacCer) and neolactotetraosylceramide (nLc(4)Cer; paragloboside), resulting in the synthesis of Lc(3)Cer and neolactopentaosylceramide (nLc(5)Cer), respectively. Probably plays a central role in regulating neolacto-series glycolipid synthesis during embryonic development.</text>
</comment>
<comment type="catalytic activity">
    <reaction evidence="3 4">
        <text>a beta-D-Gal-(1-&gt;4)-beta-D-Glc-(1&lt;-&gt;1)-Cer(d18:1(4E)) + UDP-N-acetyl-alpha-D-glucosamine = a beta-D-GlcNAc-(1-&gt;3)-beta-D-Gal-(1-&gt;4)-beta-D-Glc-(1&lt;-&gt;1)-Cer(d18:1(4E)) + UDP + H(+)</text>
        <dbReference type="Rhea" id="RHEA:13905"/>
        <dbReference type="ChEBI" id="CHEBI:15378"/>
        <dbReference type="ChEBI" id="CHEBI:17103"/>
        <dbReference type="ChEBI" id="CHEBI:17950"/>
        <dbReference type="ChEBI" id="CHEBI:57705"/>
        <dbReference type="ChEBI" id="CHEBI:58223"/>
        <dbReference type="EC" id="2.4.1.206"/>
    </reaction>
    <physiologicalReaction direction="left-to-right" evidence="3 4">
        <dbReference type="Rhea" id="RHEA:13906"/>
    </physiologicalReaction>
</comment>
<comment type="catalytic activity">
    <reaction evidence="3">
        <text>a neolactoside nLc4Cer(d18:1(4E)) + UDP-N-acetyl-alpha-D-glucosamine = a neolactoside IV(3)-beta-GlcNAc-nLc4Cer(d18:1(4E)) + UDP + H(+)</text>
        <dbReference type="Rhea" id="RHEA:23004"/>
        <dbReference type="ChEBI" id="CHEBI:15378"/>
        <dbReference type="ChEBI" id="CHEBI:17006"/>
        <dbReference type="ChEBI" id="CHEBI:57705"/>
        <dbReference type="ChEBI" id="CHEBI:58223"/>
        <dbReference type="ChEBI" id="CHEBI:142448"/>
    </reaction>
    <physiologicalReaction direction="left-to-right" evidence="3">
        <dbReference type="Rhea" id="RHEA:23005"/>
    </physiologicalReaction>
</comment>
<comment type="pathway">
    <text>Protein modification; protein glycosylation.</text>
</comment>
<comment type="interaction">
    <interactant intactId="EBI-3923833">
        <id>Q9BYG0</id>
    </interactant>
    <interactant intactId="EBI-10303987">
        <id>Q9UHG0</id>
        <label>DCDC2</label>
    </interactant>
    <organismsDiffer>false</organismsDiffer>
    <experiments>3</experiments>
</comment>
<comment type="subcellular location">
    <subcellularLocation>
        <location evidence="1">Golgi apparatus membrane</location>
        <topology evidence="1">Single-pass type II membrane protein</topology>
    </subcellularLocation>
</comment>
<comment type="tissue specificity">
    <text evidence="3">Widely expressed. Highly expressed in lung, colon, placenta, testis, pituitary gland and cerebellum. Weakly expressed in brain, liver, spleen, lymph node and thymus.</text>
</comment>
<comment type="induction">
    <text evidence="3">Up-regulated by stimulation with retinoic acid and down-regulated with 12-O-tetradecanoylphorbol-13-acetate (TPA).</text>
</comment>
<comment type="similarity">
    <text evidence="5">Belongs to the glycosyltransferase 31 family.</text>
</comment>
<comment type="sequence caution" evidence="5">
    <conflict type="frameshift">
        <sequence resource="EMBL-CDS" id="BAD92754"/>
    </conflict>
</comment>
<comment type="online information" name="Functional Glycomics Gateway - GTase">
    <link uri="http://www.functionalglycomics.org/glycomics/molecule/jsp/glycoEnzyme/viewGlycoEnzyme.jsp?gbpId=gt_hum_538"/>
    <text>Beta1,3-N-acetylglucosaminyltransferase 5</text>
</comment>
<name>B3GN5_HUMAN</name>
<proteinExistence type="evidence at protein level"/>
<dbReference type="EC" id="2.4.1.206" evidence="3"/>
<dbReference type="EMBL" id="AB045278">
    <property type="protein sequence ID" value="BAB40940.1"/>
    <property type="molecule type" value="mRNA"/>
</dbReference>
<dbReference type="EMBL" id="AF368169">
    <property type="protein sequence ID" value="AAK53403.1"/>
    <property type="molecule type" value="mRNA"/>
</dbReference>
<dbReference type="EMBL" id="AJ304505">
    <property type="protein sequence ID" value="CAC83093.1"/>
    <property type="molecule type" value="mRNA"/>
</dbReference>
<dbReference type="EMBL" id="AB209517">
    <property type="protein sequence ID" value="BAD92754.1"/>
    <property type="status" value="ALT_FRAME"/>
    <property type="molecule type" value="mRNA"/>
</dbReference>
<dbReference type="EMBL" id="CH471052">
    <property type="protein sequence ID" value="EAW78333.1"/>
    <property type="molecule type" value="Genomic_DNA"/>
</dbReference>
<dbReference type="EMBL" id="CH471052">
    <property type="protein sequence ID" value="EAW78334.1"/>
    <property type="molecule type" value="Genomic_DNA"/>
</dbReference>
<dbReference type="EMBL" id="CH471052">
    <property type="protein sequence ID" value="EAW78335.1"/>
    <property type="molecule type" value="Genomic_DNA"/>
</dbReference>
<dbReference type="EMBL" id="CH471052">
    <property type="protein sequence ID" value="EAW78336.1"/>
    <property type="molecule type" value="Genomic_DNA"/>
</dbReference>
<dbReference type="EMBL" id="BC028058">
    <property type="protein sequence ID" value="AAH28058.1"/>
    <property type="molecule type" value="mRNA"/>
</dbReference>
<dbReference type="CCDS" id="CCDS3244.1"/>
<dbReference type="RefSeq" id="NP_114436.1">
    <property type="nucleotide sequence ID" value="NM_032047.5"/>
</dbReference>
<dbReference type="RefSeq" id="XP_005247880.1">
    <property type="nucleotide sequence ID" value="XM_005247823.6"/>
</dbReference>
<dbReference type="RefSeq" id="XP_005247881.1">
    <property type="nucleotide sequence ID" value="XM_005247824.3"/>
</dbReference>
<dbReference type="RefSeq" id="XP_005247882.1">
    <property type="nucleotide sequence ID" value="XM_005247825.3"/>
</dbReference>
<dbReference type="RefSeq" id="XP_011511527.1">
    <property type="nucleotide sequence ID" value="XM_011513225.2"/>
</dbReference>
<dbReference type="RefSeq" id="XP_011511528.1">
    <property type="nucleotide sequence ID" value="XM_011513226.2"/>
</dbReference>
<dbReference type="RefSeq" id="XP_011511529.1">
    <property type="nucleotide sequence ID" value="XM_011513227.3"/>
</dbReference>
<dbReference type="RefSeq" id="XP_011511530.1">
    <property type="nucleotide sequence ID" value="XM_011513228.3"/>
</dbReference>
<dbReference type="RefSeq" id="XP_011511531.1">
    <property type="nucleotide sequence ID" value="XM_011513229.2"/>
</dbReference>
<dbReference type="RefSeq" id="XP_016862798.1">
    <property type="nucleotide sequence ID" value="XM_017007309.1"/>
</dbReference>
<dbReference type="RefSeq" id="XP_047305013.1">
    <property type="nucleotide sequence ID" value="XM_047449057.1"/>
</dbReference>
<dbReference type="RefSeq" id="XP_047305014.1">
    <property type="nucleotide sequence ID" value="XM_047449058.1"/>
</dbReference>
<dbReference type="RefSeq" id="XP_047305015.1">
    <property type="nucleotide sequence ID" value="XM_047449059.1"/>
</dbReference>
<dbReference type="RefSeq" id="XP_054204045.1">
    <property type="nucleotide sequence ID" value="XM_054348070.1"/>
</dbReference>
<dbReference type="RefSeq" id="XP_054204046.1">
    <property type="nucleotide sequence ID" value="XM_054348071.1"/>
</dbReference>
<dbReference type="SMR" id="Q9BYG0"/>
<dbReference type="BioGRID" id="123846">
    <property type="interactions" value="6"/>
</dbReference>
<dbReference type="FunCoup" id="Q9BYG0">
    <property type="interactions" value="438"/>
</dbReference>
<dbReference type="IntAct" id="Q9BYG0">
    <property type="interactions" value="3"/>
</dbReference>
<dbReference type="STRING" id="9606.ENSP00000316173"/>
<dbReference type="SwissLipids" id="SLP:000000768"/>
<dbReference type="CAZy" id="GT31">
    <property type="family name" value="Glycosyltransferase Family 31"/>
</dbReference>
<dbReference type="GlyCosmos" id="Q9BYG0">
    <property type="glycosylation" value="1 site, No reported glycans"/>
</dbReference>
<dbReference type="GlyGen" id="Q9BYG0">
    <property type="glycosylation" value="1 site"/>
</dbReference>
<dbReference type="PhosphoSitePlus" id="Q9BYG0"/>
<dbReference type="BioMuta" id="B3GNT5"/>
<dbReference type="DMDM" id="74733473"/>
<dbReference type="jPOST" id="Q9BYG0"/>
<dbReference type="MassIVE" id="Q9BYG0"/>
<dbReference type="PaxDb" id="9606-ENSP00000316173"/>
<dbReference type="PeptideAtlas" id="Q9BYG0"/>
<dbReference type="ProteomicsDB" id="79636"/>
<dbReference type="Antibodypedia" id="2643">
    <property type="antibodies" value="129 antibodies from 22 providers"/>
</dbReference>
<dbReference type="DNASU" id="84002"/>
<dbReference type="Ensembl" id="ENST00000326505.4">
    <property type="protein sequence ID" value="ENSP00000316173.3"/>
    <property type="gene ID" value="ENSG00000176597.12"/>
</dbReference>
<dbReference type="Ensembl" id="ENST00000460419.1">
    <property type="protein sequence ID" value="ENSP00000420778.1"/>
    <property type="gene ID" value="ENSG00000176597.12"/>
</dbReference>
<dbReference type="Ensembl" id="ENST00000465010.1">
    <property type="protein sequence ID" value="ENSP00000417868.1"/>
    <property type="gene ID" value="ENSG00000176597.12"/>
</dbReference>
<dbReference type="GeneID" id="84002"/>
<dbReference type="KEGG" id="hsa:84002"/>
<dbReference type="MANE-Select" id="ENST00000326505.4">
    <property type="protein sequence ID" value="ENSP00000316173.3"/>
    <property type="RefSeq nucleotide sequence ID" value="NM_032047.5"/>
    <property type="RefSeq protein sequence ID" value="NP_114436.1"/>
</dbReference>
<dbReference type="UCSC" id="uc003flk.3">
    <property type="organism name" value="human"/>
</dbReference>
<dbReference type="AGR" id="HGNC:15684"/>
<dbReference type="CTD" id="84002"/>
<dbReference type="DisGeNET" id="84002"/>
<dbReference type="GeneCards" id="B3GNT5"/>
<dbReference type="HGNC" id="HGNC:15684">
    <property type="gene designation" value="B3GNT5"/>
</dbReference>
<dbReference type="HPA" id="ENSG00000176597">
    <property type="expression patterns" value="Tissue enhanced (bone)"/>
</dbReference>
<dbReference type="MIM" id="615333">
    <property type="type" value="gene"/>
</dbReference>
<dbReference type="neXtProt" id="NX_Q9BYG0"/>
<dbReference type="OpenTargets" id="ENSG00000176597"/>
<dbReference type="PharmGKB" id="PA25221"/>
<dbReference type="VEuPathDB" id="HostDB:ENSG00000176597"/>
<dbReference type="eggNOG" id="KOG2287">
    <property type="taxonomic scope" value="Eukaryota"/>
</dbReference>
<dbReference type="GeneTree" id="ENSGT00940000159676"/>
<dbReference type="HOGENOM" id="CLU_036849_2_4_1"/>
<dbReference type="InParanoid" id="Q9BYG0"/>
<dbReference type="OMA" id="VQLFATC"/>
<dbReference type="OrthoDB" id="115198at2759"/>
<dbReference type="PAN-GO" id="Q9BYG0">
    <property type="GO annotations" value="3 GO annotations based on evolutionary models"/>
</dbReference>
<dbReference type="PhylomeDB" id="Q9BYG0"/>
<dbReference type="TreeFam" id="TF318639"/>
<dbReference type="BioCyc" id="MetaCyc:ENSG00000176597-MONOMER"/>
<dbReference type="BRENDA" id="2.4.1.206">
    <property type="organism ID" value="2681"/>
</dbReference>
<dbReference type="PathwayCommons" id="Q9BYG0"/>
<dbReference type="Reactome" id="R-HSA-913709">
    <property type="pathway name" value="O-linked glycosylation of mucins"/>
</dbReference>
<dbReference type="Reactome" id="R-HSA-9840309">
    <property type="pathway name" value="Glycosphingolipid biosynthesis"/>
</dbReference>
<dbReference type="SignaLink" id="Q9BYG0"/>
<dbReference type="UniPathway" id="UPA00378"/>
<dbReference type="BioGRID-ORCS" id="84002">
    <property type="hits" value="24 hits in 1156 CRISPR screens"/>
</dbReference>
<dbReference type="ChiTaRS" id="B3GNT5">
    <property type="organism name" value="human"/>
</dbReference>
<dbReference type="GenomeRNAi" id="84002"/>
<dbReference type="Pharos" id="Q9BYG0">
    <property type="development level" value="Tbio"/>
</dbReference>
<dbReference type="PRO" id="PR:Q9BYG0"/>
<dbReference type="Proteomes" id="UP000005640">
    <property type="component" value="Chromosome 3"/>
</dbReference>
<dbReference type="RNAct" id="Q9BYG0">
    <property type="molecule type" value="protein"/>
</dbReference>
<dbReference type="Bgee" id="ENSG00000176597">
    <property type="expression patterns" value="Expressed in ileal mucosa and 169 other cell types or tissues"/>
</dbReference>
<dbReference type="ExpressionAtlas" id="Q9BYG0">
    <property type="expression patterns" value="baseline and differential"/>
</dbReference>
<dbReference type="GO" id="GO:0000139">
    <property type="term" value="C:Golgi membrane"/>
    <property type="evidence" value="ECO:0000318"/>
    <property type="project" value="GO_Central"/>
</dbReference>
<dbReference type="GO" id="GO:0016757">
    <property type="term" value="F:glycosyltransferase activity"/>
    <property type="evidence" value="ECO:0000318"/>
    <property type="project" value="GO_Central"/>
</dbReference>
<dbReference type="GO" id="GO:0047256">
    <property type="term" value="F:lactosylceramide 1,3-N-acetyl-beta-D-glucosaminyltransferase activity"/>
    <property type="evidence" value="ECO:0000314"/>
    <property type="project" value="UniProtKB"/>
</dbReference>
<dbReference type="GO" id="GO:0008499">
    <property type="term" value="F:N-acetyl-beta-D-glucosaminide beta-(1,3)-galactosyltransferase activity"/>
    <property type="evidence" value="ECO:0000304"/>
    <property type="project" value="Reactome"/>
</dbReference>
<dbReference type="GO" id="GO:0007417">
    <property type="term" value="P:central nervous system development"/>
    <property type="evidence" value="ECO:0000314"/>
    <property type="project" value="UniProtKB"/>
</dbReference>
<dbReference type="GO" id="GO:0009247">
    <property type="term" value="P:glycolipid biosynthetic process"/>
    <property type="evidence" value="ECO:0000304"/>
    <property type="project" value="UniProtKB"/>
</dbReference>
<dbReference type="GO" id="GO:0006688">
    <property type="term" value="P:glycosphingolipid biosynthetic process"/>
    <property type="evidence" value="ECO:0000304"/>
    <property type="project" value="Reactome"/>
</dbReference>
<dbReference type="GO" id="GO:0016266">
    <property type="term" value="P:O-glycan processing"/>
    <property type="evidence" value="ECO:0000304"/>
    <property type="project" value="Reactome"/>
</dbReference>
<dbReference type="GO" id="GO:0006486">
    <property type="term" value="P:protein glycosylation"/>
    <property type="evidence" value="ECO:0000304"/>
    <property type="project" value="UniProtKB"/>
</dbReference>
<dbReference type="GO" id="GO:0006493">
    <property type="term" value="P:protein O-linked glycosylation"/>
    <property type="evidence" value="ECO:0000318"/>
    <property type="project" value="GO_Central"/>
</dbReference>
<dbReference type="FunFam" id="3.90.550.50:FF:000019">
    <property type="entry name" value="Hexosyltransferase"/>
    <property type="match status" value="1"/>
</dbReference>
<dbReference type="Gene3D" id="3.90.550.50">
    <property type="match status" value="1"/>
</dbReference>
<dbReference type="InterPro" id="IPR002659">
    <property type="entry name" value="Glyco_trans_31"/>
</dbReference>
<dbReference type="PANTHER" id="PTHR11214">
    <property type="entry name" value="BETA-1,3-N-ACETYLGLUCOSAMINYLTRANSFERASE"/>
    <property type="match status" value="1"/>
</dbReference>
<dbReference type="PANTHER" id="PTHR11214:SF21">
    <property type="entry name" value="LACTOSYLCERAMIDE 1,3-N-ACETYL-BETA-D-GLUCOSAMINYLTRANSFERASE"/>
    <property type="match status" value="1"/>
</dbReference>
<dbReference type="Pfam" id="PF01762">
    <property type="entry name" value="Galactosyl_T"/>
    <property type="match status" value="1"/>
</dbReference>
<sequence length="378" mass="44053">MRMLVSGRRVKKWQLIIQLFATCFLASLMFFWEPIDNHIVSHMKSYSYRYLINSYDFVNDTLSLKHTSAGPRYQYLINHKEKCQAQDVLLLLFVKTAPENYDRRSGIRRTWGNENYVRSQLNANIKTLFALGTPNPLEGEELQRKLAWEDQRYNDIIQQDFVDSFYNLTLKLLMQFSWANTYCPHAKFLMTADDDIFIHMPNLIEYLQSLEQIGVQDFWIGRVHRGAPPIRDKSSKYYVSYEMYQWPAYPDYTAGAAYVISGDVAAKVYEASQTLNSSLYIDDVFMGLCANKIGIVPQDHVFFSGEGKTPYHPCIYEKMMTSHGHLEDLQDLWKNATDPKVKTISKGFFGQIYCRLMKIILLCKISYVDTYPCRAAFI</sequence>
<feature type="chain" id="PRO_0000289209" description="Lactosylceramide 1,3-N-acetyl-beta-D-glucosaminyltransferase">
    <location>
        <begin position="1"/>
        <end position="378"/>
    </location>
</feature>
<feature type="topological domain" description="Cytoplasmic" evidence="2">
    <location>
        <begin position="1"/>
        <end position="14"/>
    </location>
</feature>
<feature type="transmembrane region" description="Helical; Signal-anchor for type II membrane protein" evidence="2">
    <location>
        <begin position="15"/>
        <end position="35"/>
    </location>
</feature>
<feature type="topological domain" description="Lumenal" evidence="2">
    <location>
        <begin position="36"/>
        <end position="378"/>
    </location>
</feature>
<feature type="glycosylation site" description="N-linked (GlcNAc...) asparagine" evidence="2">
    <location>
        <position position="59"/>
    </location>
</feature>
<protein>
    <recommendedName>
        <fullName evidence="5">Lactosylceramide 1,3-N-acetyl-beta-D-glucosaminyltransferase</fullName>
        <ecNumber evidence="3">2.4.1.206</ecNumber>
    </recommendedName>
    <alternativeName>
        <fullName>Lactotriaosylceramide synthase</fullName>
        <shortName>Lc(3)Cer synthase</shortName>
        <shortName>Lc3 synthase</shortName>
    </alternativeName>
    <alternativeName>
        <fullName>UDP-GlcNAc:beta-Gal beta-1,3-N-acetylglucosaminyltransferase 5</fullName>
        <shortName>BGnT-5</shortName>
        <shortName>Beta-1,3-Gn-T5</shortName>
        <shortName>Beta-1,3-N-acetylglucosaminyltransferase 5</shortName>
        <shortName>Beta3Gn-T5</shortName>
    </alternativeName>
</protein>
<gene>
    <name evidence="6" type="primary">B3GNT5</name>
</gene>
<accession>Q9BYG0</accession>
<accession>D3DNS5</accession>
<accession>Q59FE3</accession>
<accession>Q7L9Z5</accession>
<accession>Q8WWP9</accession>
<reference key="1">
    <citation type="journal article" date="2001" name="J. Biol. Chem.">
        <title>Molecular cloning and characterization of UDP-GlcNAc:lactosylceramide beta 1,3-N-acetylglucosaminyltransferase (beta 3Gn-T5), an essential enzyme for the expression of HNK-1 and Lewis X epitopes on glycolipids.</title>
        <authorList>
            <person name="Togayachi A."/>
            <person name="Akashima T."/>
            <person name="Ookubo R."/>
            <person name="Kudo T."/>
            <person name="Nishihara S."/>
            <person name="Iwasaki H."/>
            <person name="Natsume A."/>
            <person name="Mio H."/>
            <person name="Inokuchi J."/>
            <person name="Irimura T."/>
            <person name="Sasaki K."/>
            <person name="Narimatsu H."/>
        </authorList>
    </citation>
    <scope>NUCLEOTIDE SEQUENCE [MRNA]</scope>
    <scope>CATALYTIC ACTIVITY</scope>
    <scope>TISSUE SPECIFICITY</scope>
    <scope>INDUCTION</scope>
    <scope>FUNCTION</scope>
</reference>
<reference key="2">
    <citation type="journal article" date="2001" name="J. Biol. Chem.">
        <title>Cloning of a mouse beta 1,3 N-acetylglucosaminyltransferase GlcNAc(beta 1,3)Gal(beta 1,4)Glc-ceramide synthase gene encoding the key regulator of lacto-series glycolipid biosynthesis.</title>
        <authorList>
            <person name="Henion T.R."/>
            <person name="Zhou D."/>
            <person name="Wolfer D.P."/>
            <person name="Jungalwala F.B."/>
            <person name="Hennet T."/>
        </authorList>
    </citation>
    <scope>NUCLEOTIDE SEQUENCE [MRNA]</scope>
    <scope>CATALYTIC ACTIVITY</scope>
    <scope>FUNCTION</scope>
</reference>
<reference key="3">
    <citation type="submission" date="2000-12" db="EMBL/GenBank/DDBJ databases">
        <authorList>
            <person name="Bennett E.P."/>
        </authorList>
    </citation>
    <scope>NUCLEOTIDE SEQUENCE [MRNA]</scope>
</reference>
<reference key="4">
    <citation type="submission" date="2005-03" db="EMBL/GenBank/DDBJ databases">
        <authorList>
            <person name="Totoki Y."/>
            <person name="Toyoda A."/>
            <person name="Takeda T."/>
            <person name="Sakaki Y."/>
            <person name="Tanaka A."/>
            <person name="Yokoyama S."/>
            <person name="Ohara O."/>
            <person name="Nagase T."/>
            <person name="Kikuno R.F."/>
        </authorList>
    </citation>
    <scope>NUCLEOTIDE SEQUENCE [LARGE SCALE MRNA]</scope>
    <source>
        <tissue>Brain</tissue>
    </source>
</reference>
<reference key="5">
    <citation type="submission" date="2005-09" db="EMBL/GenBank/DDBJ databases">
        <authorList>
            <person name="Mural R.J."/>
            <person name="Istrail S."/>
            <person name="Sutton G.G."/>
            <person name="Florea L."/>
            <person name="Halpern A.L."/>
            <person name="Mobarry C.M."/>
            <person name="Lippert R."/>
            <person name="Walenz B."/>
            <person name="Shatkay H."/>
            <person name="Dew I."/>
            <person name="Miller J.R."/>
            <person name="Flanigan M.J."/>
            <person name="Edwards N.J."/>
            <person name="Bolanos R."/>
            <person name="Fasulo D."/>
            <person name="Halldorsson B.V."/>
            <person name="Hannenhalli S."/>
            <person name="Turner R."/>
            <person name="Yooseph S."/>
            <person name="Lu F."/>
            <person name="Nusskern D.R."/>
            <person name="Shue B.C."/>
            <person name="Zheng X.H."/>
            <person name="Zhong F."/>
            <person name="Delcher A.L."/>
            <person name="Huson D.H."/>
            <person name="Kravitz S.A."/>
            <person name="Mouchard L."/>
            <person name="Reinert K."/>
            <person name="Remington K.A."/>
            <person name="Clark A.G."/>
            <person name="Waterman M.S."/>
            <person name="Eichler E.E."/>
            <person name="Adams M.D."/>
            <person name="Hunkapiller M.W."/>
            <person name="Myers E.W."/>
            <person name="Venter J.C."/>
        </authorList>
    </citation>
    <scope>NUCLEOTIDE SEQUENCE [LARGE SCALE GENOMIC DNA]</scope>
</reference>
<reference key="6">
    <citation type="journal article" date="2004" name="Genome Res.">
        <title>The status, quality, and expansion of the NIH full-length cDNA project: the Mammalian Gene Collection (MGC).</title>
        <authorList>
            <consortium name="The MGC Project Team"/>
        </authorList>
    </citation>
    <scope>NUCLEOTIDE SEQUENCE [LARGE SCALE MRNA]</scope>
    <source>
        <tissue>Brain</tissue>
    </source>
</reference>
<organism>
    <name type="scientific">Homo sapiens</name>
    <name type="common">Human</name>
    <dbReference type="NCBI Taxonomy" id="9606"/>
    <lineage>
        <taxon>Eukaryota</taxon>
        <taxon>Metazoa</taxon>
        <taxon>Chordata</taxon>
        <taxon>Craniata</taxon>
        <taxon>Vertebrata</taxon>
        <taxon>Euteleostomi</taxon>
        <taxon>Mammalia</taxon>
        <taxon>Eutheria</taxon>
        <taxon>Euarchontoglires</taxon>
        <taxon>Primates</taxon>
        <taxon>Haplorrhini</taxon>
        <taxon>Catarrhini</taxon>
        <taxon>Hominidae</taxon>
        <taxon>Homo</taxon>
    </lineage>
</organism>
<evidence type="ECO:0000250" key="1"/>
<evidence type="ECO:0000255" key="2"/>
<evidence type="ECO:0000269" key="3">
    <source>
    </source>
</evidence>
<evidence type="ECO:0000269" key="4">
    <source>
    </source>
</evidence>
<evidence type="ECO:0000305" key="5"/>
<evidence type="ECO:0000312" key="6">
    <source>
        <dbReference type="HGNC" id="HGNC:15684"/>
    </source>
</evidence>